<organism>
    <name type="scientific">Frankia alni (strain DSM 45986 / CECT 9034 / ACN14a)</name>
    <dbReference type="NCBI Taxonomy" id="326424"/>
    <lineage>
        <taxon>Bacteria</taxon>
        <taxon>Bacillati</taxon>
        <taxon>Actinomycetota</taxon>
        <taxon>Actinomycetes</taxon>
        <taxon>Frankiales</taxon>
        <taxon>Frankiaceae</taxon>
        <taxon>Frankia</taxon>
    </lineage>
</organism>
<comment type="function">
    <text evidence="1">Bifunctional enzyme that catalyzes the enolization of 2,3-diketo-5-methylthiopentyl-1-phosphate (DK-MTP-1-P) into the intermediate 2-hydroxy-3-keto-5-methylthiopentenyl-1-phosphate (HK-MTPenyl-1-P), which is then dephosphorylated to form the acireductone 1,2-dihydroxy-3-keto-5-methylthiopentene (DHK-MTPene).</text>
</comment>
<comment type="catalytic activity">
    <reaction evidence="1">
        <text>5-methylsulfanyl-2,3-dioxopentyl phosphate + H2O = 1,2-dihydroxy-5-(methylsulfanyl)pent-1-en-3-one + phosphate</text>
        <dbReference type="Rhea" id="RHEA:21700"/>
        <dbReference type="ChEBI" id="CHEBI:15377"/>
        <dbReference type="ChEBI" id="CHEBI:43474"/>
        <dbReference type="ChEBI" id="CHEBI:49252"/>
        <dbReference type="ChEBI" id="CHEBI:58828"/>
        <dbReference type="EC" id="3.1.3.77"/>
    </reaction>
</comment>
<comment type="cofactor">
    <cofactor evidence="1">
        <name>Mg(2+)</name>
        <dbReference type="ChEBI" id="CHEBI:18420"/>
    </cofactor>
    <text evidence="1">Binds 1 Mg(2+) ion per subunit.</text>
</comment>
<comment type="pathway">
    <text evidence="1">Amino-acid biosynthesis; L-methionine biosynthesis via salvage pathway; L-methionine from S-methyl-5-thio-alpha-D-ribose 1-phosphate: step 3/6.</text>
</comment>
<comment type="pathway">
    <text evidence="1">Amino-acid biosynthesis; L-methionine biosynthesis via salvage pathway; L-methionine from S-methyl-5-thio-alpha-D-ribose 1-phosphate: step 4/6.</text>
</comment>
<comment type="subunit">
    <text evidence="1">Monomer.</text>
</comment>
<comment type="similarity">
    <text evidence="1">Belongs to the HAD-like hydrolase superfamily. MasA/MtnC family.</text>
</comment>
<proteinExistence type="inferred from homology"/>
<reference key="1">
    <citation type="journal article" date="2007" name="Genome Res.">
        <title>Genome characteristics of facultatively symbiotic Frankia sp. strains reflect host range and host plant biogeography.</title>
        <authorList>
            <person name="Normand P."/>
            <person name="Lapierre P."/>
            <person name="Tisa L.S."/>
            <person name="Gogarten J.P."/>
            <person name="Alloisio N."/>
            <person name="Bagnarol E."/>
            <person name="Bassi C.A."/>
            <person name="Berry A.M."/>
            <person name="Bickhart D.M."/>
            <person name="Choisne N."/>
            <person name="Couloux A."/>
            <person name="Cournoyer B."/>
            <person name="Cruveiller S."/>
            <person name="Daubin V."/>
            <person name="Demange N."/>
            <person name="Francino M.P."/>
            <person name="Goltsman E."/>
            <person name="Huang Y."/>
            <person name="Kopp O.R."/>
            <person name="Labarre L."/>
            <person name="Lapidus A."/>
            <person name="Lavire C."/>
            <person name="Marechal J."/>
            <person name="Martinez M."/>
            <person name="Mastronunzio J.E."/>
            <person name="Mullin B.C."/>
            <person name="Niemann J."/>
            <person name="Pujic P."/>
            <person name="Rawnsley T."/>
            <person name="Rouy Z."/>
            <person name="Schenowitz C."/>
            <person name="Sellstedt A."/>
            <person name="Tavares F."/>
            <person name="Tomkins J.P."/>
            <person name="Vallenet D."/>
            <person name="Valverde C."/>
            <person name="Wall L.G."/>
            <person name="Wang Y."/>
            <person name="Medigue C."/>
            <person name="Benson D.R."/>
        </authorList>
    </citation>
    <scope>NUCLEOTIDE SEQUENCE [LARGE SCALE GENOMIC DNA]</scope>
    <source>
        <strain>DSM 45986 / CECT 9034 / ACN14a</strain>
    </source>
</reference>
<protein>
    <recommendedName>
        <fullName evidence="1">Enolase-phosphatase E1</fullName>
        <ecNumber evidence="1">3.1.3.77</ecNumber>
    </recommendedName>
    <alternativeName>
        <fullName evidence="1">2,3-diketo-5-methylthio-1-phosphopentane phosphatase</fullName>
    </alternativeName>
</protein>
<evidence type="ECO:0000255" key="1">
    <source>
        <dbReference type="HAMAP-Rule" id="MF_01681"/>
    </source>
</evidence>
<sequence>MSSPRPSAELALLDIEGTTSPTAAVLSSLFPYARARLGPWVRDHGDDPEVRRIVAEARSLLGEADAPVQRVVAALTRWSDDDRKVAPLKALQGLIWAAGFAAGELTGELFDDVAPALRRWHAAGVRLAVFSSGSVLAQRAWFAATPAGDLTGLFDGYFDIDSAGPKRDPAAYRRIATELAVTPRRAVFLSDVSAELDAASAAGFATVAVLRPGEPHHLAGNHPCVASFAEMAVDAA</sequence>
<name>MTNC_FRAAA</name>
<dbReference type="EC" id="3.1.3.77" evidence="1"/>
<dbReference type="EMBL" id="CT573213">
    <property type="protein sequence ID" value="CAJ60067.1"/>
    <property type="molecule type" value="Genomic_DNA"/>
</dbReference>
<dbReference type="RefSeq" id="WP_011602604.1">
    <property type="nucleotide sequence ID" value="NC_008278.1"/>
</dbReference>
<dbReference type="SMR" id="Q0RQV6"/>
<dbReference type="STRING" id="326424.FRAAL1409"/>
<dbReference type="KEGG" id="fal:FRAAL1409"/>
<dbReference type="eggNOG" id="COG4229">
    <property type="taxonomic scope" value="Bacteria"/>
</dbReference>
<dbReference type="HOGENOM" id="CLU_023273_0_0_11"/>
<dbReference type="OrthoDB" id="9797416at2"/>
<dbReference type="UniPathway" id="UPA00904">
    <property type="reaction ID" value="UER00876"/>
</dbReference>
<dbReference type="UniPathway" id="UPA00904">
    <property type="reaction ID" value="UER00877"/>
</dbReference>
<dbReference type="Proteomes" id="UP000000657">
    <property type="component" value="Chromosome"/>
</dbReference>
<dbReference type="GO" id="GO:0043715">
    <property type="term" value="F:2,3-diketo-5-methylthiopentyl-1-phosphate enolase activity"/>
    <property type="evidence" value="ECO:0007669"/>
    <property type="project" value="UniProtKB-UniRule"/>
</dbReference>
<dbReference type="GO" id="GO:0043716">
    <property type="term" value="F:2-hydroxy-3-keto-5-methylthiopentenyl-1-phosphate phosphatase activity"/>
    <property type="evidence" value="ECO:0007669"/>
    <property type="project" value="UniProtKB-UniRule"/>
</dbReference>
<dbReference type="GO" id="GO:0043874">
    <property type="term" value="F:acireductone synthase activity"/>
    <property type="evidence" value="ECO:0007669"/>
    <property type="project" value="UniProtKB-EC"/>
</dbReference>
<dbReference type="GO" id="GO:0000287">
    <property type="term" value="F:magnesium ion binding"/>
    <property type="evidence" value="ECO:0007669"/>
    <property type="project" value="UniProtKB-UniRule"/>
</dbReference>
<dbReference type="GO" id="GO:0019509">
    <property type="term" value="P:L-methionine salvage from methylthioadenosine"/>
    <property type="evidence" value="ECO:0007669"/>
    <property type="project" value="UniProtKB-UniRule"/>
</dbReference>
<dbReference type="CDD" id="cd01629">
    <property type="entry name" value="HAD_EP"/>
    <property type="match status" value="1"/>
</dbReference>
<dbReference type="Gene3D" id="1.10.720.60">
    <property type="match status" value="1"/>
</dbReference>
<dbReference type="Gene3D" id="3.40.50.1000">
    <property type="entry name" value="HAD superfamily/HAD-like"/>
    <property type="match status" value="1"/>
</dbReference>
<dbReference type="HAMAP" id="MF_01681">
    <property type="entry name" value="Salvage_MtnC"/>
    <property type="match status" value="1"/>
</dbReference>
<dbReference type="InterPro" id="IPR023943">
    <property type="entry name" value="Enolase-ppase_E1"/>
</dbReference>
<dbReference type="InterPro" id="IPR036412">
    <property type="entry name" value="HAD-like_sf"/>
</dbReference>
<dbReference type="InterPro" id="IPR006439">
    <property type="entry name" value="HAD-SF_hydro_IA"/>
</dbReference>
<dbReference type="InterPro" id="IPR023214">
    <property type="entry name" value="HAD_sf"/>
</dbReference>
<dbReference type="NCBIfam" id="TIGR01691">
    <property type="entry name" value="enolase-ppase"/>
    <property type="match status" value="1"/>
</dbReference>
<dbReference type="NCBIfam" id="TIGR01509">
    <property type="entry name" value="HAD-SF-IA-v3"/>
    <property type="match status" value="1"/>
</dbReference>
<dbReference type="PANTHER" id="PTHR20371">
    <property type="entry name" value="ENOLASE-PHOSPHATASE E1"/>
    <property type="match status" value="1"/>
</dbReference>
<dbReference type="PANTHER" id="PTHR20371:SF1">
    <property type="entry name" value="ENOLASE-PHOSPHATASE E1"/>
    <property type="match status" value="1"/>
</dbReference>
<dbReference type="Pfam" id="PF00702">
    <property type="entry name" value="Hydrolase"/>
    <property type="match status" value="1"/>
</dbReference>
<dbReference type="PRINTS" id="PR00413">
    <property type="entry name" value="HADHALOGNASE"/>
</dbReference>
<dbReference type="SFLD" id="SFLDG01133">
    <property type="entry name" value="C1.5.4:_Enolase-phosphatase_Li"/>
    <property type="match status" value="1"/>
</dbReference>
<dbReference type="SFLD" id="SFLDS00003">
    <property type="entry name" value="Haloacid_Dehalogenase"/>
    <property type="match status" value="1"/>
</dbReference>
<dbReference type="SUPFAM" id="SSF56784">
    <property type="entry name" value="HAD-like"/>
    <property type="match status" value="1"/>
</dbReference>
<gene>
    <name evidence="1" type="primary">mtnC</name>
    <name type="ordered locus">FRAAL1409</name>
</gene>
<accession>Q0RQV6</accession>
<feature type="chain" id="PRO_0000357366" description="Enolase-phosphatase E1">
    <location>
        <begin position="1"/>
        <end position="236"/>
    </location>
</feature>
<keyword id="KW-0028">Amino-acid biosynthesis</keyword>
<keyword id="KW-0378">Hydrolase</keyword>
<keyword id="KW-0460">Magnesium</keyword>
<keyword id="KW-0479">Metal-binding</keyword>
<keyword id="KW-0486">Methionine biosynthesis</keyword>
<keyword id="KW-1185">Reference proteome</keyword>